<accession>B0SJF2</accession>
<reference key="1">
    <citation type="journal article" date="2008" name="PLoS ONE">
        <title>Genome sequence of the saprophyte Leptospira biflexa provides insights into the evolution of Leptospira and the pathogenesis of leptospirosis.</title>
        <authorList>
            <person name="Picardeau M."/>
            <person name="Bulach D.M."/>
            <person name="Bouchier C."/>
            <person name="Zuerner R.L."/>
            <person name="Zidane N."/>
            <person name="Wilson P.J."/>
            <person name="Creno S."/>
            <person name="Kuczek E.S."/>
            <person name="Bommezzadri S."/>
            <person name="Davis J.C."/>
            <person name="McGrath A."/>
            <person name="Johnson M.J."/>
            <person name="Boursaux-Eude C."/>
            <person name="Seemann T."/>
            <person name="Rouy Z."/>
            <person name="Coppel R.L."/>
            <person name="Rood J.I."/>
            <person name="Lajus A."/>
            <person name="Davies J.K."/>
            <person name="Medigue C."/>
            <person name="Adler B."/>
        </authorList>
    </citation>
    <scope>NUCLEOTIDE SEQUENCE [LARGE SCALE GENOMIC DNA]</scope>
    <source>
        <strain>Patoc 1 / ATCC 23582 / Paris</strain>
    </source>
</reference>
<proteinExistence type="inferred from homology"/>
<name>SYFB_LEPBP</name>
<organism>
    <name type="scientific">Leptospira biflexa serovar Patoc (strain Patoc 1 / ATCC 23582 / Paris)</name>
    <dbReference type="NCBI Taxonomy" id="456481"/>
    <lineage>
        <taxon>Bacteria</taxon>
        <taxon>Pseudomonadati</taxon>
        <taxon>Spirochaetota</taxon>
        <taxon>Spirochaetia</taxon>
        <taxon>Leptospirales</taxon>
        <taxon>Leptospiraceae</taxon>
        <taxon>Leptospira</taxon>
    </lineage>
</organism>
<feature type="chain" id="PRO_1000114939" description="Phenylalanine--tRNA ligase beta subunit">
    <location>
        <begin position="1"/>
        <end position="799"/>
    </location>
</feature>
<feature type="domain" description="tRNA-binding" evidence="1">
    <location>
        <begin position="40"/>
        <end position="147"/>
    </location>
</feature>
<feature type="domain" description="B5" evidence="1">
    <location>
        <begin position="402"/>
        <end position="479"/>
    </location>
</feature>
<feature type="domain" description="FDX-ACB" evidence="1">
    <location>
        <begin position="707"/>
        <end position="799"/>
    </location>
</feature>
<feature type="binding site" evidence="1">
    <location>
        <position position="457"/>
    </location>
    <ligand>
        <name>Mg(2+)</name>
        <dbReference type="ChEBI" id="CHEBI:18420"/>
        <note>shared with alpha subunit</note>
    </ligand>
</feature>
<feature type="binding site" evidence="1">
    <location>
        <position position="463"/>
    </location>
    <ligand>
        <name>Mg(2+)</name>
        <dbReference type="ChEBI" id="CHEBI:18420"/>
        <note>shared with alpha subunit</note>
    </ligand>
</feature>
<feature type="binding site" evidence="1">
    <location>
        <position position="466"/>
    </location>
    <ligand>
        <name>Mg(2+)</name>
        <dbReference type="ChEBI" id="CHEBI:18420"/>
        <note>shared with alpha subunit</note>
    </ligand>
</feature>
<feature type="binding site" evidence="1">
    <location>
        <position position="467"/>
    </location>
    <ligand>
        <name>Mg(2+)</name>
        <dbReference type="ChEBI" id="CHEBI:18420"/>
        <note>shared with alpha subunit</note>
    </ligand>
</feature>
<protein>
    <recommendedName>
        <fullName evidence="1">Phenylalanine--tRNA ligase beta subunit</fullName>
        <ecNumber evidence="1">6.1.1.20</ecNumber>
    </recommendedName>
    <alternativeName>
        <fullName evidence="1">Phenylalanyl-tRNA synthetase beta subunit</fullName>
        <shortName evidence="1">PheRS</shortName>
    </alternativeName>
</protein>
<keyword id="KW-0030">Aminoacyl-tRNA synthetase</keyword>
<keyword id="KW-0067">ATP-binding</keyword>
<keyword id="KW-0963">Cytoplasm</keyword>
<keyword id="KW-0436">Ligase</keyword>
<keyword id="KW-0460">Magnesium</keyword>
<keyword id="KW-0479">Metal-binding</keyword>
<keyword id="KW-0547">Nucleotide-binding</keyword>
<keyword id="KW-0648">Protein biosynthesis</keyword>
<keyword id="KW-1185">Reference proteome</keyword>
<keyword id="KW-0694">RNA-binding</keyword>
<keyword id="KW-0820">tRNA-binding</keyword>
<dbReference type="EC" id="6.1.1.20" evidence="1"/>
<dbReference type="EMBL" id="CP000786">
    <property type="protein sequence ID" value="ABZ96450.1"/>
    <property type="molecule type" value="Genomic_DNA"/>
</dbReference>
<dbReference type="RefSeq" id="WP_012387338.1">
    <property type="nucleotide sequence ID" value="NC_010602.1"/>
</dbReference>
<dbReference type="SMR" id="B0SJF2"/>
<dbReference type="STRING" id="456481.LEPBI_I0306"/>
<dbReference type="KEGG" id="lbi:LEPBI_I0306"/>
<dbReference type="HOGENOM" id="CLU_016891_0_0_12"/>
<dbReference type="OrthoDB" id="9805455at2"/>
<dbReference type="BioCyc" id="LBIF456481:LEPBI_RS01495-MONOMER"/>
<dbReference type="Proteomes" id="UP000001847">
    <property type="component" value="Chromosome I"/>
</dbReference>
<dbReference type="GO" id="GO:0009328">
    <property type="term" value="C:phenylalanine-tRNA ligase complex"/>
    <property type="evidence" value="ECO:0007669"/>
    <property type="project" value="TreeGrafter"/>
</dbReference>
<dbReference type="GO" id="GO:0005524">
    <property type="term" value="F:ATP binding"/>
    <property type="evidence" value="ECO:0007669"/>
    <property type="project" value="UniProtKB-UniRule"/>
</dbReference>
<dbReference type="GO" id="GO:0000287">
    <property type="term" value="F:magnesium ion binding"/>
    <property type="evidence" value="ECO:0007669"/>
    <property type="project" value="UniProtKB-UniRule"/>
</dbReference>
<dbReference type="GO" id="GO:0004826">
    <property type="term" value="F:phenylalanine-tRNA ligase activity"/>
    <property type="evidence" value="ECO:0007669"/>
    <property type="project" value="UniProtKB-UniRule"/>
</dbReference>
<dbReference type="GO" id="GO:0000049">
    <property type="term" value="F:tRNA binding"/>
    <property type="evidence" value="ECO:0007669"/>
    <property type="project" value="UniProtKB-KW"/>
</dbReference>
<dbReference type="GO" id="GO:0006432">
    <property type="term" value="P:phenylalanyl-tRNA aminoacylation"/>
    <property type="evidence" value="ECO:0007669"/>
    <property type="project" value="UniProtKB-UniRule"/>
</dbReference>
<dbReference type="CDD" id="cd02796">
    <property type="entry name" value="tRNA_bind_bactPheRS"/>
    <property type="match status" value="1"/>
</dbReference>
<dbReference type="Gene3D" id="3.30.56.10">
    <property type="match status" value="2"/>
</dbReference>
<dbReference type="Gene3D" id="3.30.930.10">
    <property type="entry name" value="Bira Bifunctional Protein, Domain 2"/>
    <property type="match status" value="1"/>
</dbReference>
<dbReference type="Gene3D" id="3.30.70.380">
    <property type="entry name" value="Ferrodoxin-fold anticodon-binding domain"/>
    <property type="match status" value="1"/>
</dbReference>
<dbReference type="Gene3D" id="2.40.50.140">
    <property type="entry name" value="Nucleic acid-binding proteins"/>
    <property type="match status" value="1"/>
</dbReference>
<dbReference type="Gene3D" id="3.50.40.10">
    <property type="entry name" value="Phenylalanyl-trna Synthetase, Chain B, domain 3"/>
    <property type="match status" value="1"/>
</dbReference>
<dbReference type="HAMAP" id="MF_00283">
    <property type="entry name" value="Phe_tRNA_synth_beta1"/>
    <property type="match status" value="1"/>
</dbReference>
<dbReference type="InterPro" id="IPR045864">
    <property type="entry name" value="aa-tRNA-synth_II/BPL/LPL"/>
</dbReference>
<dbReference type="InterPro" id="IPR005146">
    <property type="entry name" value="B3/B4_tRNA-bd"/>
</dbReference>
<dbReference type="InterPro" id="IPR009061">
    <property type="entry name" value="DNA-bd_dom_put_sf"/>
</dbReference>
<dbReference type="InterPro" id="IPR005121">
    <property type="entry name" value="Fdx_antiC-bd"/>
</dbReference>
<dbReference type="InterPro" id="IPR036690">
    <property type="entry name" value="Fdx_antiC-bd_sf"/>
</dbReference>
<dbReference type="InterPro" id="IPR012340">
    <property type="entry name" value="NA-bd_OB-fold"/>
</dbReference>
<dbReference type="InterPro" id="IPR045060">
    <property type="entry name" value="Phe-tRNA-ligase_IIc_bsu"/>
</dbReference>
<dbReference type="InterPro" id="IPR004532">
    <property type="entry name" value="Phe-tRNA-ligase_IIc_bsu_bact"/>
</dbReference>
<dbReference type="InterPro" id="IPR020825">
    <property type="entry name" value="Phe-tRNA_synthase-like_B3/B4"/>
</dbReference>
<dbReference type="InterPro" id="IPR041616">
    <property type="entry name" value="PheRS_beta_core"/>
</dbReference>
<dbReference type="InterPro" id="IPR002547">
    <property type="entry name" value="tRNA-bd_dom"/>
</dbReference>
<dbReference type="InterPro" id="IPR033714">
    <property type="entry name" value="tRNA_bind_bactPheRS"/>
</dbReference>
<dbReference type="InterPro" id="IPR005147">
    <property type="entry name" value="tRNA_synthase_B5-dom"/>
</dbReference>
<dbReference type="NCBIfam" id="TIGR00472">
    <property type="entry name" value="pheT_bact"/>
    <property type="match status" value="1"/>
</dbReference>
<dbReference type="PANTHER" id="PTHR10947:SF0">
    <property type="entry name" value="PHENYLALANINE--TRNA LIGASE BETA SUBUNIT"/>
    <property type="match status" value="1"/>
</dbReference>
<dbReference type="PANTHER" id="PTHR10947">
    <property type="entry name" value="PHENYLALANYL-TRNA SYNTHETASE BETA CHAIN AND LEUCINE-RICH REPEAT-CONTAINING PROTEIN 47"/>
    <property type="match status" value="1"/>
</dbReference>
<dbReference type="Pfam" id="PF03483">
    <property type="entry name" value="B3_4"/>
    <property type="match status" value="1"/>
</dbReference>
<dbReference type="Pfam" id="PF03484">
    <property type="entry name" value="B5"/>
    <property type="match status" value="1"/>
</dbReference>
<dbReference type="Pfam" id="PF03147">
    <property type="entry name" value="FDX-ACB"/>
    <property type="match status" value="1"/>
</dbReference>
<dbReference type="Pfam" id="PF01588">
    <property type="entry name" value="tRNA_bind"/>
    <property type="match status" value="1"/>
</dbReference>
<dbReference type="Pfam" id="PF17759">
    <property type="entry name" value="tRNA_synthFbeta"/>
    <property type="match status" value="1"/>
</dbReference>
<dbReference type="SMART" id="SM00873">
    <property type="entry name" value="B3_4"/>
    <property type="match status" value="1"/>
</dbReference>
<dbReference type="SMART" id="SM00874">
    <property type="entry name" value="B5"/>
    <property type="match status" value="1"/>
</dbReference>
<dbReference type="SMART" id="SM00896">
    <property type="entry name" value="FDX-ACB"/>
    <property type="match status" value="1"/>
</dbReference>
<dbReference type="SUPFAM" id="SSF54991">
    <property type="entry name" value="Anticodon-binding domain of PheRS"/>
    <property type="match status" value="1"/>
</dbReference>
<dbReference type="SUPFAM" id="SSF55681">
    <property type="entry name" value="Class II aaRS and biotin synthetases"/>
    <property type="match status" value="1"/>
</dbReference>
<dbReference type="SUPFAM" id="SSF50249">
    <property type="entry name" value="Nucleic acid-binding proteins"/>
    <property type="match status" value="1"/>
</dbReference>
<dbReference type="SUPFAM" id="SSF56037">
    <property type="entry name" value="PheT/TilS domain"/>
    <property type="match status" value="1"/>
</dbReference>
<dbReference type="SUPFAM" id="SSF46955">
    <property type="entry name" value="Putative DNA-binding domain"/>
    <property type="match status" value="1"/>
</dbReference>
<dbReference type="PROSITE" id="PS51483">
    <property type="entry name" value="B5"/>
    <property type="match status" value="1"/>
</dbReference>
<dbReference type="PROSITE" id="PS51447">
    <property type="entry name" value="FDX_ACB"/>
    <property type="match status" value="1"/>
</dbReference>
<dbReference type="PROSITE" id="PS50886">
    <property type="entry name" value="TRBD"/>
    <property type="match status" value="1"/>
</dbReference>
<gene>
    <name evidence="1" type="primary">pheT</name>
    <name type="ordered locus">LEPBI_I0306</name>
</gene>
<sequence length="799" mass="90740">MKLSVDWLNEFTPLSQIPFEKVLEKINTSICEIDDVEEFKSHLSSVITVKIKSLEKHPNAEKLQTTIATDGSKEYQIVTAATNVAVGDIVPLALPGTKLDGKEILDSELRGVRSQGMYCSEKELGMALESSGVLILPKDTTLGISVRKYFLWEDTILTIDNKSITHRPDLWNHFGFARELASQLQIPLHHFPLQADTKWESGNQGLTVEKSEHAHAYYVCSIQNVNITESIPKIKSRLEKCGIRSINNVVDVSNYLLLELGQPTHFFDRSKLQSTSFTVSKSKEGESISLLDDTSPTLPNHILLIQNGETPVALAGVMGGKDSAVSESTKEIVMESAVFKREDVRYTIRKTNIRTESAVRYEKGLDSYTCLPVMKRAVQLLKENGNPNVKVFEPQGFNHTESKTVTIETNLSFLRHKLGKKISLHEVTDILQRLGFEVTTKDESLSVLVPKYRQNYDVTIPEDLVEEIGRTIGYASIRTEALSMAVETPIRNPLRELERRVKQFLALEVGFNEVYNYSFASPTDAKLEKEFEVTSLKIANEMPEEHSLLRNSLYPGLIKQTKVNQDRFEKVNLFELGRTYHKEGNDATLAQEKRWISLLSLSKCKPTDLSSIEDEFLTVRETISELFLFLNLPKFEWVKLPRTHFHPNASLVLLYDGKEVVELGILHTRFADLYDLKRRAILSKIDMEVLVQIWETYGRNSHFVPPSHFPQGQLDLSLIMNESDPTESFANLVKTLRIPELESVFVQTIFQGESVGEGKKSVTYRFILMSYDKTFTQDRFKELSDRLVETAKSNGYSLR</sequence>
<comment type="catalytic activity">
    <reaction evidence="1">
        <text>tRNA(Phe) + L-phenylalanine + ATP = L-phenylalanyl-tRNA(Phe) + AMP + diphosphate + H(+)</text>
        <dbReference type="Rhea" id="RHEA:19413"/>
        <dbReference type="Rhea" id="RHEA-COMP:9668"/>
        <dbReference type="Rhea" id="RHEA-COMP:9699"/>
        <dbReference type="ChEBI" id="CHEBI:15378"/>
        <dbReference type="ChEBI" id="CHEBI:30616"/>
        <dbReference type="ChEBI" id="CHEBI:33019"/>
        <dbReference type="ChEBI" id="CHEBI:58095"/>
        <dbReference type="ChEBI" id="CHEBI:78442"/>
        <dbReference type="ChEBI" id="CHEBI:78531"/>
        <dbReference type="ChEBI" id="CHEBI:456215"/>
        <dbReference type="EC" id="6.1.1.20"/>
    </reaction>
</comment>
<comment type="cofactor">
    <cofactor evidence="1">
        <name>Mg(2+)</name>
        <dbReference type="ChEBI" id="CHEBI:18420"/>
    </cofactor>
    <text evidence="1">Binds 2 magnesium ions per tetramer.</text>
</comment>
<comment type="subunit">
    <text evidence="1">Tetramer of two alpha and two beta subunits.</text>
</comment>
<comment type="subcellular location">
    <subcellularLocation>
        <location evidence="1">Cytoplasm</location>
    </subcellularLocation>
</comment>
<comment type="similarity">
    <text evidence="1">Belongs to the phenylalanyl-tRNA synthetase beta subunit family. Type 1 subfamily.</text>
</comment>
<evidence type="ECO:0000255" key="1">
    <source>
        <dbReference type="HAMAP-Rule" id="MF_00283"/>
    </source>
</evidence>